<organism>
    <name type="scientific">Aspergillus flavus (strain ATCC 200026 / FGSC A1120 / IAM 13836 / NRRL 3357 / JCM 12722 / SRRC 167)</name>
    <dbReference type="NCBI Taxonomy" id="332952"/>
    <lineage>
        <taxon>Eukaryota</taxon>
        <taxon>Fungi</taxon>
        <taxon>Dikarya</taxon>
        <taxon>Ascomycota</taxon>
        <taxon>Pezizomycotina</taxon>
        <taxon>Eurotiomycetes</taxon>
        <taxon>Eurotiomycetidae</taxon>
        <taxon>Eurotiales</taxon>
        <taxon>Aspergillaceae</taxon>
        <taxon>Aspergillus</taxon>
        <taxon>Aspergillus subgen. Circumdati</taxon>
    </lineage>
</organism>
<accession>B8NP65</accession>
<feature type="signal peptide" evidence="2">
    <location>
        <begin position="1"/>
        <end position="20"/>
    </location>
</feature>
<feature type="chain" id="PRO_0000394110" description="Probable beta-glucosidase F">
    <location>
        <begin position="21"/>
        <end position="866"/>
    </location>
</feature>
<feature type="region of interest" description="Disordered" evidence="3">
    <location>
        <begin position="725"/>
        <end position="748"/>
    </location>
</feature>
<feature type="active site" evidence="1">
    <location>
        <position position="285"/>
    </location>
</feature>
<feature type="glycosylation site" description="N-linked (GlcNAc...) asparagine" evidence="2">
    <location>
        <position position="65"/>
    </location>
</feature>
<feature type="glycosylation site" description="N-linked (GlcNAc...) asparagine" evidence="2">
    <location>
        <position position="73"/>
    </location>
</feature>
<feature type="glycosylation site" description="N-linked (GlcNAc...) asparagine" evidence="2">
    <location>
        <position position="257"/>
    </location>
</feature>
<feature type="glycosylation site" description="N-linked (GlcNAc...) asparagine" evidence="2">
    <location>
        <position position="328"/>
    </location>
</feature>
<feature type="glycosylation site" description="N-linked (GlcNAc...) asparagine" evidence="2">
    <location>
        <position position="360"/>
    </location>
</feature>
<feature type="glycosylation site" description="N-linked (GlcNAc...) asparagine" evidence="2">
    <location>
        <position position="395"/>
    </location>
</feature>
<feature type="glycosylation site" description="N-linked (GlcNAc...) asparagine" evidence="2">
    <location>
        <position position="421"/>
    </location>
</feature>
<feature type="glycosylation site" description="N-linked (GlcNAc...) asparagine" evidence="2">
    <location>
        <position position="474"/>
    </location>
</feature>
<feature type="glycosylation site" description="N-linked (GlcNAc...) asparagine" evidence="2">
    <location>
        <position position="659"/>
    </location>
</feature>
<feature type="glycosylation site" description="N-linked (GlcNAc...) asparagine" evidence="2">
    <location>
        <position position="664"/>
    </location>
</feature>
<feature type="glycosylation site" description="N-linked (GlcNAc...) asparagine" evidence="2">
    <location>
        <position position="724"/>
    </location>
</feature>
<sequence>MAAFPAYLALLSYLVPGALSHPEAKTLTSRASTEAYSPPYYPAPNGGWISEWASAYEKAHRVVSNMTLAEKVNLTSGTGIYMGPCAGQTGSVPRFGIPNLCLHDSPLGVRNSDHNTAFPAGITVGATFDKDLMYERGVGLGEEARGKGINVLLGPSVGPIGRKPRGGRNWEGFGADPSLQAFGGSLTIKGMQSTGAIASLKHLIGNEQEQHRMSSVITQGYSSNIDDRTLHELYLWPFAESVRAGAGSVMIAYNDVNRSACSQNSKLINGILKDELGFQGFVVTDWLAHIGGVSSALAGLDMSMPGDGAIPLLGTSYWSWELSRSVLNGSVPVERLNDMVTRIVATWYKMGQDKDYPLPNFSSNTEDETGPLYPGALFSPSGIVNQYVNVQGNHNVTARAIARDAITLLKNNDNVLPLKRNNTLKIFGTDAGTNSDGINSCTDKGCNKGVLTMGWGSGTSRLPYLITPQEAIANISSNAGFHITDTFPSGVTAGPDDIAIVFINSDSGENYITVDGNPGDRTLAGLHAWHNGDNLVKAAAEKFSNVVVVVHTVGPILMEEWIDLDSVKAVLVAHLPGQEAGWSLTDILFGDYSPSGHLPYTIPHSESDYPESVGLIAQPFGQIQDDYTEGLYIDYRHFLKANITPRYPFGHGLSYTTFNFTEPNLSIIKALDTAYPAARPPKGSTPTYPTAKPDASEVAWPKNFNRIWRYLYPYLDNPEGAAANSSKTYPYPDGYTTEPKPAPRAGGAEGGNPALWDVTFSVQVKVTNTGSRDGRAVAQLYVELPSSLGLDTPSRQLRQFEKTKILAAGESEVLTLDVTRKDLSVWDVVVQDWKAPVNGEGVKIWVGESVADLRVGCVVGEGCSTL</sequence>
<keyword id="KW-0119">Carbohydrate metabolism</keyword>
<keyword id="KW-0136">Cellulose degradation</keyword>
<keyword id="KW-0325">Glycoprotein</keyword>
<keyword id="KW-0326">Glycosidase</keyword>
<keyword id="KW-0378">Hydrolase</keyword>
<keyword id="KW-0624">Polysaccharide degradation</keyword>
<keyword id="KW-0964">Secreted</keyword>
<keyword id="KW-0732">Signal</keyword>
<evidence type="ECO:0000250" key="1"/>
<evidence type="ECO:0000255" key="2"/>
<evidence type="ECO:0000256" key="3">
    <source>
        <dbReference type="SAM" id="MobiDB-lite"/>
    </source>
</evidence>
<evidence type="ECO:0000305" key="4"/>
<proteinExistence type="inferred from homology"/>
<protein>
    <recommendedName>
        <fullName>Probable beta-glucosidase F</fullName>
        <ecNumber>3.2.1.21</ecNumber>
    </recommendedName>
    <alternativeName>
        <fullName>Beta-D-glucoside glucohydrolase F</fullName>
    </alternativeName>
    <alternativeName>
        <fullName>Cellobiase F</fullName>
    </alternativeName>
    <alternativeName>
        <fullName>Gentiobiase F</fullName>
    </alternativeName>
</protein>
<comment type="function">
    <text evidence="1">Beta-glucosidases are one of a number of cellulolytic enzymes involved in the degradation of cellulosic biomass. Catalyzes the last step releasing glucose from the inhibitory cellobiose (By similarity).</text>
</comment>
<comment type="catalytic activity">
    <reaction>
        <text>Hydrolysis of terminal, non-reducing beta-D-glucosyl residues with release of beta-D-glucose.</text>
        <dbReference type="EC" id="3.2.1.21"/>
    </reaction>
</comment>
<comment type="pathway">
    <text>Glycan metabolism; cellulose degradation.</text>
</comment>
<comment type="subcellular location">
    <subcellularLocation>
        <location evidence="1">Secreted</location>
    </subcellularLocation>
</comment>
<comment type="similarity">
    <text evidence="4">Belongs to the glycosyl hydrolase 3 family.</text>
</comment>
<gene>
    <name type="primary">bglF</name>
    <name type="ORF">AFLA_128480</name>
</gene>
<name>BGLF_ASPFN</name>
<reference key="1">
    <citation type="journal article" date="2015" name="Genome Announc.">
        <title>Genome sequence of Aspergillus flavus NRRL 3357, a strain that causes aflatoxin contamination of food and feed.</title>
        <authorList>
            <person name="Nierman W.C."/>
            <person name="Yu J."/>
            <person name="Fedorova-Abrams N.D."/>
            <person name="Losada L."/>
            <person name="Cleveland T.E."/>
            <person name="Bhatnagar D."/>
            <person name="Bennett J.W."/>
            <person name="Dean R."/>
            <person name="Payne G.A."/>
        </authorList>
    </citation>
    <scope>NUCLEOTIDE SEQUENCE [LARGE SCALE GENOMIC DNA]</scope>
    <source>
        <strain>ATCC 200026 / FGSC A1120 / IAM 13836 / NRRL 3357 / JCM 12722 / SRRC 167</strain>
    </source>
</reference>
<dbReference type="EC" id="3.2.1.21"/>
<dbReference type="EMBL" id="EQ963481">
    <property type="protein sequence ID" value="EED48625.1"/>
    <property type="molecule type" value="Genomic_DNA"/>
</dbReference>
<dbReference type="RefSeq" id="XP_002382041.1">
    <property type="nucleotide sequence ID" value="XM_002382000.1"/>
</dbReference>
<dbReference type="SMR" id="B8NP65"/>
<dbReference type="STRING" id="332952.B8NP65"/>
<dbReference type="GlyCosmos" id="B8NP65">
    <property type="glycosylation" value="11 sites, No reported glycans"/>
</dbReference>
<dbReference type="EnsemblFungi" id="EED48625">
    <property type="protein sequence ID" value="EED48625"/>
    <property type="gene ID" value="AFLA_128480"/>
</dbReference>
<dbReference type="VEuPathDB" id="FungiDB:AFLA_012667"/>
<dbReference type="eggNOG" id="ENOG502QR4D">
    <property type="taxonomic scope" value="Eukaryota"/>
</dbReference>
<dbReference type="HOGENOM" id="CLU_004542_2_0_1"/>
<dbReference type="OMA" id="PAPYGGW"/>
<dbReference type="UniPathway" id="UPA00696"/>
<dbReference type="GO" id="GO:0005576">
    <property type="term" value="C:extracellular region"/>
    <property type="evidence" value="ECO:0007669"/>
    <property type="project" value="UniProtKB-SubCell"/>
</dbReference>
<dbReference type="GO" id="GO:0008422">
    <property type="term" value="F:beta-glucosidase activity"/>
    <property type="evidence" value="ECO:0007669"/>
    <property type="project" value="UniProtKB-EC"/>
</dbReference>
<dbReference type="GO" id="GO:0030245">
    <property type="term" value="P:cellulose catabolic process"/>
    <property type="evidence" value="ECO:0007669"/>
    <property type="project" value="UniProtKB-UniPathway"/>
</dbReference>
<dbReference type="FunFam" id="2.60.40.10:FF:001619">
    <property type="entry name" value="Beta-glucosidase"/>
    <property type="match status" value="1"/>
</dbReference>
<dbReference type="FunFam" id="3.20.20.300:FF:000002">
    <property type="entry name" value="Probable beta-glucosidase"/>
    <property type="match status" value="1"/>
</dbReference>
<dbReference type="FunFam" id="3.40.50.1700:FF:000003">
    <property type="entry name" value="Probable beta-glucosidase"/>
    <property type="match status" value="1"/>
</dbReference>
<dbReference type="Gene3D" id="3.40.50.1700">
    <property type="entry name" value="Glycoside hydrolase family 3 C-terminal domain"/>
    <property type="match status" value="1"/>
</dbReference>
<dbReference type="Gene3D" id="3.20.20.300">
    <property type="entry name" value="Glycoside hydrolase, family 3, N-terminal domain"/>
    <property type="match status" value="1"/>
</dbReference>
<dbReference type="Gene3D" id="2.60.40.10">
    <property type="entry name" value="Immunoglobulins"/>
    <property type="match status" value="1"/>
</dbReference>
<dbReference type="InterPro" id="IPR050288">
    <property type="entry name" value="Cellulose_deg_GH3"/>
</dbReference>
<dbReference type="InterPro" id="IPR026891">
    <property type="entry name" value="Fn3-like"/>
</dbReference>
<dbReference type="InterPro" id="IPR019800">
    <property type="entry name" value="Glyco_hydro_3_AS"/>
</dbReference>
<dbReference type="InterPro" id="IPR002772">
    <property type="entry name" value="Glyco_hydro_3_C"/>
</dbReference>
<dbReference type="InterPro" id="IPR036881">
    <property type="entry name" value="Glyco_hydro_3_C_sf"/>
</dbReference>
<dbReference type="InterPro" id="IPR001764">
    <property type="entry name" value="Glyco_hydro_3_N"/>
</dbReference>
<dbReference type="InterPro" id="IPR036962">
    <property type="entry name" value="Glyco_hydro_3_N_sf"/>
</dbReference>
<dbReference type="InterPro" id="IPR017853">
    <property type="entry name" value="Glycoside_hydrolase_SF"/>
</dbReference>
<dbReference type="InterPro" id="IPR013783">
    <property type="entry name" value="Ig-like_fold"/>
</dbReference>
<dbReference type="PANTHER" id="PTHR42715">
    <property type="entry name" value="BETA-GLUCOSIDASE"/>
    <property type="match status" value="1"/>
</dbReference>
<dbReference type="PANTHER" id="PTHR42715:SF2">
    <property type="entry name" value="BETA-GLUCOSIDASE F-RELATED"/>
    <property type="match status" value="1"/>
</dbReference>
<dbReference type="Pfam" id="PF14310">
    <property type="entry name" value="Fn3-like"/>
    <property type="match status" value="1"/>
</dbReference>
<dbReference type="Pfam" id="PF00933">
    <property type="entry name" value="Glyco_hydro_3"/>
    <property type="match status" value="1"/>
</dbReference>
<dbReference type="Pfam" id="PF01915">
    <property type="entry name" value="Glyco_hydro_3_C"/>
    <property type="match status" value="1"/>
</dbReference>
<dbReference type="PRINTS" id="PR00133">
    <property type="entry name" value="GLHYDRLASE3"/>
</dbReference>
<dbReference type="SMART" id="SM01217">
    <property type="entry name" value="Fn3_like"/>
    <property type="match status" value="1"/>
</dbReference>
<dbReference type="SUPFAM" id="SSF51445">
    <property type="entry name" value="(Trans)glycosidases"/>
    <property type="match status" value="1"/>
</dbReference>
<dbReference type="SUPFAM" id="SSF52279">
    <property type="entry name" value="Beta-D-glucan exohydrolase, C-terminal domain"/>
    <property type="match status" value="1"/>
</dbReference>
<dbReference type="PROSITE" id="PS00775">
    <property type="entry name" value="GLYCOSYL_HYDROL_F3"/>
    <property type="match status" value="1"/>
</dbReference>